<evidence type="ECO:0000255" key="1">
    <source>
        <dbReference type="HAMAP-Rule" id="MF_01600"/>
    </source>
</evidence>
<feature type="chain" id="PRO_0000335540" description="UPF0182 protein CLB_0018">
    <location>
        <begin position="1"/>
        <end position="893"/>
    </location>
</feature>
<feature type="transmembrane region" description="Helical" evidence="1">
    <location>
        <begin position="9"/>
        <end position="29"/>
    </location>
</feature>
<feature type="transmembrane region" description="Helical" evidence="1">
    <location>
        <begin position="49"/>
        <end position="69"/>
    </location>
</feature>
<feature type="transmembrane region" description="Helical" evidence="1">
    <location>
        <begin position="94"/>
        <end position="114"/>
    </location>
</feature>
<feature type="transmembrane region" description="Helical" evidence="1">
    <location>
        <begin position="154"/>
        <end position="174"/>
    </location>
</feature>
<feature type="transmembrane region" description="Helical" evidence="1">
    <location>
        <begin position="202"/>
        <end position="222"/>
    </location>
</feature>
<feature type="transmembrane region" description="Helical" evidence="1">
    <location>
        <begin position="246"/>
        <end position="266"/>
    </location>
</feature>
<feature type="transmembrane region" description="Helical" evidence="1">
    <location>
        <begin position="273"/>
        <end position="293"/>
    </location>
</feature>
<keyword id="KW-1003">Cell membrane</keyword>
<keyword id="KW-0472">Membrane</keyword>
<keyword id="KW-0812">Transmembrane</keyword>
<keyword id="KW-1133">Transmembrane helix</keyword>
<sequence length="893" mass="104057">MKNKKALFIPLFIIILFIAFFNKIINFIINIKWFKEVNYLAVYFTKMRAIIILMIPIFIIFFISIWMYYKSLIINKNKSVVDIGLNKNNYGKKLFFIFNFIVSIFLAYIFSSSYWYRILQFNNSVDFNVKDPIFFKDVSFYIFKLPLFESLYKVIISLLLFLVITTFIAYFILEAKYKIQSKKDINLKNINHGIKSFAGKQLAIVSGLIILFISFGHLIKIWNLVYSSNGVSFGASYTDVHATLLFYKIIVVITLISSIVTLLSIVKGKFKPVSICIGITIFLIVSQNIASFLVQNFIVKSNEKTLEQPYIKNNIDLTRKAFALDDIEIRDFDIKNDLQKQDITDNKASIDNIRINSFKPTLEFYNQVQIIRYYYTFNDIDIDRYNINGKYNQVFLAAREIDTDALNPNTWQNRHLIYTHGFGAVMNKVNSVTSEGQPDFVIKDIPPYNKTNIKLANPRIYFGEKTNDYVIVNTKINEFDYPKEDSNKTNKYNGHAGIKMSFINRLLFAINKKDINFLLSKDIKKDSKIIINRNIVERAKKIAPFLTYDSDPYMVIYNGKIYWIIDAYTTTNRYPYSEPYDSINYIRNSAKVVIDSVDGDINFYITDKKDPIVNNYAKIFKGLFKEEKDAPKEIREHFRYPKDLFSIQSKVLGKYHVKDPGVFYNGEDLWEVSKDQKHVEGETNTNDAPYIIMKLPDQNKEEMVLLNYFNVMKKDNMIALFGARMDGEQYGKKILYKLPSDKTVYSPYLFKQKINQDTNISKELSLWNREGSKVQYGDTIILPIKNSLLYIEPLYLRASGKNSIPEMKRVILSYNDKLVLSSSIQEGIKEIFNSKDNKINDKNEKDSTKTIDDSKLKKAQEYYNKAIEAQKNGDWTKYGENINELGNILNSIK</sequence>
<organism>
    <name type="scientific">Clostridium botulinum (strain ATCC 19397 / Type A)</name>
    <dbReference type="NCBI Taxonomy" id="441770"/>
    <lineage>
        <taxon>Bacteria</taxon>
        <taxon>Bacillati</taxon>
        <taxon>Bacillota</taxon>
        <taxon>Clostridia</taxon>
        <taxon>Eubacteriales</taxon>
        <taxon>Clostridiaceae</taxon>
        <taxon>Clostridium</taxon>
    </lineage>
</organism>
<dbReference type="EMBL" id="CP000726">
    <property type="protein sequence ID" value="ABS33718.1"/>
    <property type="molecule type" value="Genomic_DNA"/>
</dbReference>
<dbReference type="RefSeq" id="WP_011947903.1">
    <property type="nucleotide sequence ID" value="NC_009697.1"/>
</dbReference>
<dbReference type="SMR" id="A7FQ49"/>
<dbReference type="KEGG" id="cba:CLB_0018"/>
<dbReference type="HOGENOM" id="CLU_007733_0_0_9"/>
<dbReference type="GO" id="GO:0005576">
    <property type="term" value="C:extracellular region"/>
    <property type="evidence" value="ECO:0007669"/>
    <property type="project" value="TreeGrafter"/>
</dbReference>
<dbReference type="GO" id="GO:0005886">
    <property type="term" value="C:plasma membrane"/>
    <property type="evidence" value="ECO:0007669"/>
    <property type="project" value="UniProtKB-SubCell"/>
</dbReference>
<dbReference type="HAMAP" id="MF_01600">
    <property type="entry name" value="UPF0182"/>
    <property type="match status" value="1"/>
</dbReference>
<dbReference type="InterPro" id="IPR005372">
    <property type="entry name" value="UPF0182"/>
</dbReference>
<dbReference type="NCBIfam" id="NF000825">
    <property type="entry name" value="PRK00068.1"/>
    <property type="match status" value="1"/>
</dbReference>
<dbReference type="PANTHER" id="PTHR39344">
    <property type="entry name" value="UPF0182 PROTEIN SLL1060"/>
    <property type="match status" value="1"/>
</dbReference>
<dbReference type="PANTHER" id="PTHR39344:SF1">
    <property type="entry name" value="UPF0182 PROTEIN SLL1060"/>
    <property type="match status" value="1"/>
</dbReference>
<dbReference type="Pfam" id="PF03699">
    <property type="entry name" value="UPF0182"/>
    <property type="match status" value="1"/>
</dbReference>
<comment type="subcellular location">
    <subcellularLocation>
        <location evidence="1">Cell membrane</location>
        <topology evidence="1">Multi-pass membrane protein</topology>
    </subcellularLocation>
</comment>
<comment type="similarity">
    <text evidence="1">Belongs to the UPF0182 family.</text>
</comment>
<protein>
    <recommendedName>
        <fullName evidence="1">UPF0182 protein CLB_0018</fullName>
    </recommendedName>
</protein>
<gene>
    <name type="ordered locus">CLB_0018</name>
</gene>
<name>Y018_CLOB1</name>
<accession>A7FQ49</accession>
<proteinExistence type="inferred from homology"/>
<reference key="1">
    <citation type="journal article" date="2007" name="PLoS ONE">
        <title>Analysis of the neurotoxin complex genes in Clostridium botulinum A1-A4 and B1 strains: BoNT/A3, /Ba4 and /B1 clusters are located within plasmids.</title>
        <authorList>
            <person name="Smith T.J."/>
            <person name="Hill K.K."/>
            <person name="Foley B.T."/>
            <person name="Detter J.C."/>
            <person name="Munk A.C."/>
            <person name="Bruce D.C."/>
            <person name="Doggett N.A."/>
            <person name="Smith L.A."/>
            <person name="Marks J.D."/>
            <person name="Xie G."/>
            <person name="Brettin T.S."/>
        </authorList>
    </citation>
    <scope>NUCLEOTIDE SEQUENCE [LARGE SCALE GENOMIC DNA]</scope>
    <source>
        <strain>ATCC 19397 / Type A</strain>
    </source>
</reference>